<protein>
    <recommendedName>
        <fullName evidence="5">Small ribosomal subunit protein eS32B</fullName>
    </recommendedName>
    <alternativeName>
        <fullName>60S ribosomal protein L41-B</fullName>
    </alternativeName>
    <alternativeName>
        <fullName evidence="4">Large ribosomal subunit protein eL41B</fullName>
    </alternativeName>
</protein>
<reference key="1">
    <citation type="journal article" date="2002" name="Nature">
        <title>The genome sequence of Schizosaccharomyces pombe.</title>
        <authorList>
            <person name="Wood V."/>
            <person name="Gwilliam R."/>
            <person name="Rajandream M.A."/>
            <person name="Lyne M.H."/>
            <person name="Lyne R."/>
            <person name="Stewart A."/>
            <person name="Sgouros J.G."/>
            <person name="Peat N."/>
            <person name="Hayles J."/>
            <person name="Baker S.G."/>
            <person name="Basham D."/>
            <person name="Bowman S."/>
            <person name="Brooks K."/>
            <person name="Brown D."/>
            <person name="Brown S."/>
            <person name="Chillingworth T."/>
            <person name="Churcher C.M."/>
            <person name="Collins M."/>
            <person name="Connor R."/>
            <person name="Cronin A."/>
            <person name="Davis P."/>
            <person name="Feltwell T."/>
            <person name="Fraser A."/>
            <person name="Gentles S."/>
            <person name="Goble A."/>
            <person name="Hamlin N."/>
            <person name="Harris D.E."/>
            <person name="Hidalgo J."/>
            <person name="Hodgson G."/>
            <person name="Holroyd S."/>
            <person name="Hornsby T."/>
            <person name="Howarth S."/>
            <person name="Huckle E.J."/>
            <person name="Hunt S."/>
            <person name="Jagels K."/>
            <person name="James K.D."/>
            <person name="Jones L."/>
            <person name="Jones M."/>
            <person name="Leather S."/>
            <person name="McDonald S."/>
            <person name="McLean J."/>
            <person name="Mooney P."/>
            <person name="Moule S."/>
            <person name="Mungall K.L."/>
            <person name="Murphy L.D."/>
            <person name="Niblett D."/>
            <person name="Odell C."/>
            <person name="Oliver K."/>
            <person name="O'Neil S."/>
            <person name="Pearson D."/>
            <person name="Quail M.A."/>
            <person name="Rabbinowitsch E."/>
            <person name="Rutherford K.M."/>
            <person name="Rutter S."/>
            <person name="Saunders D."/>
            <person name="Seeger K."/>
            <person name="Sharp S."/>
            <person name="Skelton J."/>
            <person name="Simmonds M.N."/>
            <person name="Squares R."/>
            <person name="Squares S."/>
            <person name="Stevens K."/>
            <person name="Taylor K."/>
            <person name="Taylor R.G."/>
            <person name="Tivey A."/>
            <person name="Walsh S.V."/>
            <person name="Warren T."/>
            <person name="Whitehead S."/>
            <person name="Woodward J.R."/>
            <person name="Volckaert G."/>
            <person name="Aert R."/>
            <person name="Robben J."/>
            <person name="Grymonprez B."/>
            <person name="Weltjens I."/>
            <person name="Vanstreels E."/>
            <person name="Rieger M."/>
            <person name="Schaefer M."/>
            <person name="Mueller-Auer S."/>
            <person name="Gabel C."/>
            <person name="Fuchs M."/>
            <person name="Duesterhoeft A."/>
            <person name="Fritzc C."/>
            <person name="Holzer E."/>
            <person name="Moestl D."/>
            <person name="Hilbert H."/>
            <person name="Borzym K."/>
            <person name="Langer I."/>
            <person name="Beck A."/>
            <person name="Lehrach H."/>
            <person name="Reinhardt R."/>
            <person name="Pohl T.M."/>
            <person name="Eger P."/>
            <person name="Zimmermann W."/>
            <person name="Wedler H."/>
            <person name="Wambutt R."/>
            <person name="Purnelle B."/>
            <person name="Goffeau A."/>
            <person name="Cadieu E."/>
            <person name="Dreano S."/>
            <person name="Gloux S."/>
            <person name="Lelaure V."/>
            <person name="Mottier S."/>
            <person name="Galibert F."/>
            <person name="Aves S.J."/>
            <person name="Xiang Z."/>
            <person name="Hunt C."/>
            <person name="Moore K."/>
            <person name="Hurst S.M."/>
            <person name="Lucas M."/>
            <person name="Rochet M."/>
            <person name="Gaillardin C."/>
            <person name="Tallada V.A."/>
            <person name="Garzon A."/>
            <person name="Thode G."/>
            <person name="Daga R.R."/>
            <person name="Cruzado L."/>
            <person name="Jimenez J."/>
            <person name="Sanchez M."/>
            <person name="del Rey F."/>
            <person name="Benito J."/>
            <person name="Dominguez A."/>
            <person name="Revuelta J.L."/>
            <person name="Moreno S."/>
            <person name="Armstrong J."/>
            <person name="Forsburg S.L."/>
            <person name="Cerutti L."/>
            <person name="Lowe T."/>
            <person name="McCombie W.R."/>
            <person name="Paulsen I."/>
            <person name="Potashkin J."/>
            <person name="Shpakovski G.V."/>
            <person name="Ussery D."/>
            <person name="Barrell B.G."/>
            <person name="Nurse P."/>
        </authorList>
    </citation>
    <scope>NUCLEOTIDE SEQUENCE [LARGE SCALE GENOMIC DNA]</scope>
    <source>
        <strain>972 / ATCC 24843</strain>
    </source>
</reference>
<reference key="2">
    <citation type="journal article" date="2006" name="Nat. Biotechnol.">
        <title>ORFeome cloning and global analysis of protein localization in the fission yeast Schizosaccharomyces pombe.</title>
        <authorList>
            <person name="Matsuyama A."/>
            <person name="Arai R."/>
            <person name="Yashiroda Y."/>
            <person name="Shirai A."/>
            <person name="Kamata A."/>
            <person name="Sekido S."/>
            <person name="Kobayashi Y."/>
            <person name="Hashimoto A."/>
            <person name="Hamamoto M."/>
            <person name="Hiraoka Y."/>
            <person name="Horinouchi S."/>
            <person name="Yoshida M."/>
        </authorList>
    </citation>
    <scope>SUBCELLULAR LOCATION [LARGE SCALE ANALYSIS]</scope>
</reference>
<reference key="3">
    <citation type="unpublished observations" date="2023-10">
        <authorList>
            <person name="Leibundgut M.A."/>
            <person name="Ban N."/>
        </authorList>
    </citation>
    <scope>REVISION OF SUBUNIT</scope>
    <scope>NOMENCLATURE</scope>
</reference>
<organism>
    <name type="scientific">Schizosaccharomyces pombe (strain 972 / ATCC 24843)</name>
    <name type="common">Fission yeast</name>
    <dbReference type="NCBI Taxonomy" id="284812"/>
    <lineage>
        <taxon>Eukaryota</taxon>
        <taxon>Fungi</taxon>
        <taxon>Dikarya</taxon>
        <taxon>Ascomycota</taxon>
        <taxon>Taphrinomycotina</taxon>
        <taxon>Schizosaccharomycetes</taxon>
        <taxon>Schizosaccharomycetales</taxon>
        <taxon>Schizosaccharomycetaceae</taxon>
        <taxon>Schizosaccharomyces</taxon>
    </lineage>
</organism>
<proteinExistence type="evidence at protein level"/>
<name>RS32B_SCHPO</name>
<keyword id="KW-0963">Cytoplasm</keyword>
<keyword id="KW-1185">Reference proteome</keyword>
<keyword id="KW-0687">Ribonucleoprotein</keyword>
<keyword id="KW-0689">Ribosomal protein</keyword>
<comment type="function">
    <text evidence="1">Component of the ribosome, a large ribonucleoprotein complex responsible for the synthesis of proteins in the cell. The small ribosomal subunit (SSU) binds messenger RNAs (mRNAs) and translates the encoded message by selecting cognate aminoacyl-transfer RNA (tRNA) molecules. The large subunit (LSU) contains the ribosomal catalytic site termed the peptidyl transferase center (PTC), which catalyzes the formation of peptide bonds, thereby polymerizing the amino acids delivered by tRNAs into a polypeptide chain. The nascent polypeptides leave the ribosome through a tunnel in the LSU and interact with protein factors that function in enzymatic processing, targeting, and the membrane insertion of nascent chains at the exit of the ribosomal tunnel.</text>
</comment>
<comment type="subunit">
    <text evidence="1 5">Component of the large ribosomal subunit (LSU) (Probable) (Ref.3). Mature yeast ribosomes consist of a small (40S) and a large (60S) subunit. The 40S small subunit contains 1 molecule of ribosomal RNA (18S rRNA) and at least 33 different proteins. The large 60S subunit contains 3 rRNA molecules (25S, 5.8S and 5S rRNA) and at least 46 different proteins.</text>
</comment>
<comment type="subcellular location">
    <subcellularLocation>
        <location evidence="3">Cytoplasm</location>
    </subcellularLocation>
</comment>
<comment type="miscellaneous">
    <text>There are 2 genes for this protein in S.pombe.</text>
</comment>
<comment type="miscellaneous">
    <text evidence="5">Initially thought to be part of the large ribosomal subunit. Crystal structures show eS32/eL41 to be a small ribosomal subunit forming a bridge at the interface of the 2 subunits.</text>
</comment>
<comment type="similarity">
    <text evidence="4">Belongs to the eukaryotic ribosomal protein eS32 family.</text>
</comment>
<sequence>MRDKWRKKRVRRLKRKRRKMRARSK</sequence>
<feature type="chain" id="PRO_0000433410" description="Small ribosomal subunit protein eS32B">
    <location>
        <begin position="1"/>
        <end position="25"/>
    </location>
</feature>
<feature type="region of interest" description="Disordered" evidence="2">
    <location>
        <begin position="1"/>
        <end position="25"/>
    </location>
</feature>
<gene>
    <name type="primary">rpl4102</name>
    <name type="synonym">rpl41b</name>
    <name type="ORF">SPAC3F10.18c</name>
    <name type="ORF">SPAC8F11.01c</name>
</gene>
<dbReference type="EMBL" id="CU329670">
    <property type="protein sequence ID" value="CAB40187.1"/>
    <property type="molecule type" value="Genomic_DNA"/>
</dbReference>
<dbReference type="PIR" id="T38719">
    <property type="entry name" value="T38719"/>
</dbReference>
<dbReference type="RefSeq" id="NP_593950.1">
    <property type="nucleotide sequence ID" value="NM_001019377.2"/>
</dbReference>
<dbReference type="SMR" id="P0CT82"/>
<dbReference type="FunCoup" id="P0CT82">
    <property type="interactions" value="191"/>
</dbReference>
<dbReference type="STRING" id="284812.P0CT82"/>
<dbReference type="EnsemblFungi" id="SPAC3F10.18c.1">
    <property type="protein sequence ID" value="SPAC3F10.18c.1:pep"/>
    <property type="gene ID" value="SPAC3F10.18c"/>
</dbReference>
<dbReference type="EnsemblFungi" id="SPAC3G6.13c.1">
    <property type="protein sequence ID" value="SPAC3G6.13c.1:pep"/>
    <property type="gene ID" value="SPAC3G6.13c"/>
</dbReference>
<dbReference type="GeneID" id="2543180"/>
<dbReference type="KEGG" id="spo:2542213"/>
<dbReference type="KEGG" id="spo:2543180"/>
<dbReference type="PomBase" id="SPAC3F10.18c">
    <property type="gene designation" value="rpl4102"/>
</dbReference>
<dbReference type="VEuPathDB" id="FungiDB:SPAC3F10.18c"/>
<dbReference type="VEuPathDB" id="FungiDB:SPAC3G6.13c"/>
<dbReference type="InParanoid" id="P0CT82"/>
<dbReference type="PRO" id="PR:P0CT82"/>
<dbReference type="Proteomes" id="UP000002485">
    <property type="component" value="Chromosome I"/>
</dbReference>
<dbReference type="GO" id="GO:0005829">
    <property type="term" value="C:cytosol"/>
    <property type="evidence" value="ECO:0007005"/>
    <property type="project" value="PomBase"/>
</dbReference>
<dbReference type="GO" id="GO:0022625">
    <property type="term" value="C:cytosolic large ribosomal subunit"/>
    <property type="evidence" value="ECO:0000266"/>
    <property type="project" value="PomBase"/>
</dbReference>
<dbReference type="GO" id="GO:0003735">
    <property type="term" value="F:structural constituent of ribosome"/>
    <property type="evidence" value="ECO:0000266"/>
    <property type="project" value="PomBase"/>
</dbReference>
<dbReference type="GO" id="GO:0002181">
    <property type="term" value="P:cytoplasmic translation"/>
    <property type="evidence" value="ECO:0000266"/>
    <property type="project" value="PomBase"/>
</dbReference>
<dbReference type="InterPro" id="IPR007836">
    <property type="entry name" value="Ribosomal_eS32"/>
</dbReference>
<dbReference type="Pfam" id="PF05162">
    <property type="entry name" value="Ribosomal_L41"/>
    <property type="match status" value="1"/>
</dbReference>
<accession>P0CT82</accession>
<accession>Q9Y710</accession>
<evidence type="ECO:0000250" key="1">
    <source>
        <dbReference type="UniProtKB" id="P0CX87"/>
    </source>
</evidence>
<evidence type="ECO:0000256" key="2">
    <source>
        <dbReference type="SAM" id="MobiDB-lite"/>
    </source>
</evidence>
<evidence type="ECO:0000269" key="3">
    <source>
    </source>
</evidence>
<evidence type="ECO:0000305" key="4"/>
<evidence type="ECO:0000305" key="5">
    <source ref="3"/>
</evidence>